<comment type="function">
    <text evidence="1">Catalyzes the cleavage of beta-carotene at its central double bond (15,15') to yield two molecules of all-trans-retinal.</text>
</comment>
<comment type="catalytic activity">
    <reaction evidence="1">
        <text>all-trans-beta-carotene + O2 = 2 all-trans-retinal</text>
        <dbReference type="Rhea" id="RHEA:32887"/>
        <dbReference type="ChEBI" id="CHEBI:15379"/>
        <dbReference type="ChEBI" id="CHEBI:17579"/>
        <dbReference type="ChEBI" id="CHEBI:17898"/>
        <dbReference type="EC" id="1.13.11.63"/>
    </reaction>
</comment>
<comment type="cofactor">
    <cofactor evidence="1">
        <name>Fe(2+)</name>
        <dbReference type="ChEBI" id="CHEBI:29033"/>
    </cofactor>
</comment>
<comment type="subcellular location">
    <subcellularLocation>
        <location evidence="1 2">Cell membrane</location>
        <topology evidence="1 2">Multi-pass membrane protein</topology>
    </subcellularLocation>
</comment>
<comment type="similarity">
    <text evidence="1 2">Belongs to the Brp/Blh beta-carotene diooxygenase family.</text>
</comment>
<comment type="caution">
    <text evidence="3">Was originally thought to regulate bop expression (PubMed:6093059). However, this seems to result from a polar effect on the downstream gene bat, which forms a transcription unit with brp.</text>
</comment>
<dbReference type="EC" id="1.13.11.63" evidence="1"/>
<dbReference type="EMBL" id="X01081">
    <property type="protein sequence ID" value="CAA25558.1"/>
    <property type="molecule type" value="Genomic_DNA"/>
</dbReference>
<dbReference type="EMBL" id="AM774415">
    <property type="protein sequence ID" value="CAP14054.1"/>
    <property type="molecule type" value="Genomic_DNA"/>
</dbReference>
<dbReference type="PIR" id="T44816">
    <property type="entry name" value="T44816"/>
</dbReference>
<dbReference type="RefSeq" id="WP_012289335.1">
    <property type="nucleotide sequence ID" value="NC_010364.1"/>
</dbReference>
<dbReference type="EnsemblBacteria" id="CAP14054">
    <property type="protein sequence ID" value="CAP14054"/>
    <property type="gene ID" value="OE_3102R"/>
</dbReference>
<dbReference type="KEGG" id="hsl:OE_3102R"/>
<dbReference type="HOGENOM" id="CLU_068196_0_0_2"/>
<dbReference type="Proteomes" id="UP000001321">
    <property type="component" value="Chromosome"/>
</dbReference>
<dbReference type="GO" id="GO:0005886">
    <property type="term" value="C:plasma membrane"/>
    <property type="evidence" value="ECO:0007669"/>
    <property type="project" value="UniProtKB-SubCell"/>
</dbReference>
<dbReference type="GO" id="GO:0003834">
    <property type="term" value="F:beta-carotene 15,15'-dioxygenase activity"/>
    <property type="evidence" value="ECO:0007669"/>
    <property type="project" value="UniProtKB-EC"/>
</dbReference>
<dbReference type="GO" id="GO:0010436">
    <property type="term" value="F:carotenoid dioxygenase activity"/>
    <property type="evidence" value="ECO:0007669"/>
    <property type="project" value="UniProtKB-UniRule"/>
</dbReference>
<dbReference type="GO" id="GO:0005506">
    <property type="term" value="F:iron ion binding"/>
    <property type="evidence" value="ECO:0007669"/>
    <property type="project" value="UniProtKB-UniRule"/>
</dbReference>
<dbReference type="GO" id="GO:0016121">
    <property type="term" value="P:carotene catabolic process"/>
    <property type="evidence" value="ECO:0007669"/>
    <property type="project" value="UniProtKB-UniRule"/>
</dbReference>
<dbReference type="HAMAP" id="MF_02093">
    <property type="entry name" value="Beta_carotene_diox"/>
    <property type="match status" value="1"/>
</dbReference>
<dbReference type="InterPro" id="IPR022270">
    <property type="entry name" value="Blh_diox"/>
</dbReference>
<dbReference type="NCBIfam" id="TIGR03753">
    <property type="entry name" value="blh_monoox"/>
    <property type="match status" value="1"/>
</dbReference>
<dbReference type="Pfam" id="PF15461">
    <property type="entry name" value="BCD"/>
    <property type="match status" value="1"/>
</dbReference>
<evidence type="ECO:0000255" key="1">
    <source>
        <dbReference type="HAMAP-Rule" id="MF_02093"/>
    </source>
</evidence>
<evidence type="ECO:0000305" key="2"/>
<evidence type="ECO:0000305" key="3">
    <source>
    </source>
</evidence>
<organism>
    <name type="scientific">Halobacterium salinarum (strain ATCC 29341 / DSM 671 / R1)</name>
    <dbReference type="NCBI Taxonomy" id="478009"/>
    <lineage>
        <taxon>Archaea</taxon>
        <taxon>Methanobacteriati</taxon>
        <taxon>Methanobacteriota</taxon>
        <taxon>Stenosarchaea group</taxon>
        <taxon>Halobacteria</taxon>
        <taxon>Halobacteriales</taxon>
        <taxon>Halobacteriaceae</taxon>
        <taxon>Halobacterium</taxon>
        <taxon>Halobacterium salinarum NRC-34001</taxon>
    </lineage>
</organism>
<proteinExistence type="inferred from homology"/>
<feature type="chain" id="PRO_0000408497" description="Probable beta-carotene 15,15'-dioxygenase Brp">
    <location>
        <begin position="1"/>
        <end position="359"/>
    </location>
</feature>
<feature type="transmembrane region" description="Helical" evidence="1">
    <location>
        <begin position="27"/>
        <end position="47"/>
    </location>
</feature>
<feature type="transmembrane region" description="Helical" evidence="1">
    <location>
        <begin position="48"/>
        <end position="68"/>
    </location>
</feature>
<feature type="transmembrane region" description="Helical" evidence="1">
    <location>
        <begin position="87"/>
        <end position="107"/>
    </location>
</feature>
<feature type="transmembrane region" description="Helical" evidence="1">
    <location>
        <begin position="108"/>
        <end position="128"/>
    </location>
</feature>
<feature type="transmembrane region" description="Helical" evidence="1">
    <location>
        <begin position="154"/>
        <end position="174"/>
    </location>
</feature>
<feature type="transmembrane region" description="Helical" evidence="1">
    <location>
        <begin position="194"/>
        <end position="216"/>
    </location>
</feature>
<feature type="transmembrane region" description="Helical" evidence="1">
    <location>
        <begin position="229"/>
        <end position="249"/>
    </location>
</feature>
<feature type="transmembrane region" description="Helical" evidence="1">
    <location>
        <begin position="293"/>
        <end position="313"/>
    </location>
</feature>
<feature type="transmembrane region" description="Helical" evidence="1">
    <location>
        <begin position="320"/>
        <end position="340"/>
    </location>
</feature>
<sequence length="359" mass="37569">MSNRSQFVPSWLVPEAAGDLPLTVSRLSLLALAAAFAVGYGAGFAVPLEVQAGVYLLGMVAMNLPHGGYEHFENLRRRAASFQGKYIVAYLVGIAAFGALFFVAPVAGLGLAVTVAVAKGGFGGVQSMDALYGTDHLRTRPQRWLAAVVRGGAVMVVPMLFWTDVFYAFSSVMISIFDPSAVSALGGDIATRRLVLGGGYGALVVAHLGLGYRRAAGTGSFLADAAETLLLIAYFALVPVVIAVGLYFPLWYSARQVARSSAVDDTAMTQADATGMLDALDADDPARATLASWAVLIVGSVATFGLAAVLWLLSPQPLGGGGILVGLVAFWSIFVSIIALPHVVVGGWLDRTRGIWYVP</sequence>
<name>BRP_HALS3</name>
<accession>B0R5N7</accession>
<accession>Q47973</accession>
<protein>
    <recommendedName>
        <fullName evidence="2">Probable beta-carotene 15,15'-dioxygenase Brp</fullName>
        <ecNumber evidence="1">1.13.11.63</ecNumber>
    </recommendedName>
    <alternativeName>
        <fullName>Bacteriorhodopsin-related protein</fullName>
    </alternativeName>
</protein>
<gene>
    <name type="primary">brp</name>
    <name type="ordered locus">OE_3102R</name>
</gene>
<keyword id="KW-1003">Cell membrane</keyword>
<keyword id="KW-0223">Dioxygenase</keyword>
<keyword id="KW-0408">Iron</keyword>
<keyword id="KW-0472">Membrane</keyword>
<keyword id="KW-0479">Metal-binding</keyword>
<keyword id="KW-0560">Oxidoreductase</keyword>
<keyword id="KW-0812">Transmembrane</keyword>
<keyword id="KW-1133">Transmembrane helix</keyword>
<reference key="1">
    <citation type="journal article" date="1984" name="Nucleic Acids Res.">
        <title>Characterization of a halobacterial gene affecting bacterio-opsin gene expression.</title>
        <authorList>
            <person name="Betlach M."/>
            <person name="Friedman J."/>
            <person name="Boyer H.W."/>
            <person name="Pfeifer F."/>
        </authorList>
    </citation>
    <scope>NUCLEOTIDE SEQUENCE [GENOMIC DNA]</scope>
    <source>
        <strain>ATCC 29341 / DSM 671 / R1</strain>
    </source>
</reference>
<reference key="2">
    <citation type="journal article" date="2008" name="Genomics">
        <title>Evolution in the laboratory: the genome of Halobacterium salinarum strain R1 compared to that of strain NRC-1.</title>
        <authorList>
            <person name="Pfeiffer F."/>
            <person name="Schuster S.C."/>
            <person name="Broicher A."/>
            <person name="Falb M."/>
            <person name="Palm P."/>
            <person name="Rodewald K."/>
            <person name="Ruepp A."/>
            <person name="Soppa J."/>
            <person name="Tittor J."/>
            <person name="Oesterhelt D."/>
        </authorList>
    </citation>
    <scope>NUCLEOTIDE SEQUENCE [LARGE SCALE GENOMIC DNA]</scope>
    <source>
        <strain>ATCC 29341 / DSM 671 / R1</strain>
    </source>
</reference>